<dbReference type="EC" id="3.1.3.48"/>
<dbReference type="EMBL" id="D64050">
    <property type="protein sequence ID" value="BAA19530.1"/>
    <property type="molecule type" value="mRNA"/>
</dbReference>
<dbReference type="EMBL" id="D38292">
    <property type="protein sequence ID" value="BAA07414.1"/>
    <property type="molecule type" value="mRNA"/>
</dbReference>
<dbReference type="EMBL" id="U14914">
    <property type="protein sequence ID" value="AAA64485.1"/>
    <property type="molecule type" value="mRNA"/>
</dbReference>
<dbReference type="PIR" id="JC4263">
    <property type="entry name" value="JC4263"/>
</dbReference>
<dbReference type="RefSeq" id="NP_001106861.1">
    <property type="nucleotide sequence ID" value="NM_001113390.1"/>
</dbReference>
<dbReference type="RefSeq" id="NP_446046.2">
    <property type="nucleotide sequence ID" value="NM_053594.2"/>
</dbReference>
<dbReference type="SMR" id="O08617"/>
<dbReference type="BioGRID" id="250182">
    <property type="interactions" value="1"/>
</dbReference>
<dbReference type="FunCoup" id="O08617">
    <property type="interactions" value="1597"/>
</dbReference>
<dbReference type="IntAct" id="O08617">
    <property type="interactions" value="1"/>
</dbReference>
<dbReference type="MINT" id="O08617"/>
<dbReference type="STRING" id="10116.ENSRNOP00000006401"/>
<dbReference type="GlyCosmos" id="O08617">
    <property type="glycosylation" value="1 site, No reported glycans"/>
</dbReference>
<dbReference type="GlyGen" id="O08617">
    <property type="glycosylation" value="2 sites"/>
</dbReference>
<dbReference type="iPTMnet" id="O08617"/>
<dbReference type="PhosphoSitePlus" id="O08617"/>
<dbReference type="PaxDb" id="10116-ENSRNOP00000006401"/>
<dbReference type="GeneID" id="94202"/>
<dbReference type="KEGG" id="rno:94202"/>
<dbReference type="UCSC" id="RGD:620780">
    <molecule id="O08617-1"/>
    <property type="organism name" value="rat"/>
</dbReference>
<dbReference type="AGR" id="RGD:620780"/>
<dbReference type="CTD" id="5801"/>
<dbReference type="RGD" id="620780">
    <property type="gene designation" value="Ptprr"/>
</dbReference>
<dbReference type="eggNOG" id="KOG0789">
    <property type="taxonomic scope" value="Eukaryota"/>
</dbReference>
<dbReference type="InParanoid" id="O08617"/>
<dbReference type="OrthoDB" id="9993594at2759"/>
<dbReference type="PhylomeDB" id="O08617"/>
<dbReference type="PRO" id="PR:O08617"/>
<dbReference type="Proteomes" id="UP000002494">
    <property type="component" value="Unplaced"/>
</dbReference>
<dbReference type="GO" id="GO:0030054">
    <property type="term" value="C:cell junction"/>
    <property type="evidence" value="ECO:0000318"/>
    <property type="project" value="GO_Central"/>
</dbReference>
<dbReference type="GO" id="GO:0005829">
    <property type="term" value="C:cytosol"/>
    <property type="evidence" value="ECO:0000318"/>
    <property type="project" value="GO_Central"/>
</dbReference>
<dbReference type="GO" id="GO:0005886">
    <property type="term" value="C:plasma membrane"/>
    <property type="evidence" value="ECO:0000318"/>
    <property type="project" value="GO_Central"/>
</dbReference>
<dbReference type="GO" id="GO:0019901">
    <property type="term" value="F:protein kinase binding"/>
    <property type="evidence" value="ECO:0000266"/>
    <property type="project" value="RGD"/>
</dbReference>
<dbReference type="GO" id="GO:0004725">
    <property type="term" value="F:protein tyrosine phosphatase activity"/>
    <property type="evidence" value="ECO:0000266"/>
    <property type="project" value="RGD"/>
</dbReference>
<dbReference type="GO" id="GO:0038128">
    <property type="term" value="P:ERBB2 signaling pathway"/>
    <property type="evidence" value="ECO:0000266"/>
    <property type="project" value="RGD"/>
</dbReference>
<dbReference type="GO" id="GO:0001701">
    <property type="term" value="P:in utero embryonic development"/>
    <property type="evidence" value="ECO:0000250"/>
    <property type="project" value="UniProtKB"/>
</dbReference>
<dbReference type="GO" id="GO:0010633">
    <property type="term" value="P:negative regulation of epithelial cell migration"/>
    <property type="evidence" value="ECO:0000266"/>
    <property type="project" value="RGD"/>
</dbReference>
<dbReference type="GO" id="GO:0070373">
    <property type="term" value="P:negative regulation of ERK1 and ERK2 cascade"/>
    <property type="evidence" value="ECO:0000266"/>
    <property type="project" value="RGD"/>
</dbReference>
<dbReference type="GO" id="GO:0007399">
    <property type="term" value="P:nervous system development"/>
    <property type="evidence" value="ECO:0000270"/>
    <property type="project" value="RGD"/>
</dbReference>
<dbReference type="GO" id="GO:0030182">
    <property type="term" value="P:neuron differentiation"/>
    <property type="evidence" value="ECO:0000270"/>
    <property type="project" value="RGD"/>
</dbReference>
<dbReference type="GO" id="GO:0007165">
    <property type="term" value="P:signal transduction"/>
    <property type="evidence" value="ECO:0000318"/>
    <property type="project" value="GO_Central"/>
</dbReference>
<dbReference type="CDD" id="cd14611">
    <property type="entry name" value="R-PTPc-R"/>
    <property type="match status" value="1"/>
</dbReference>
<dbReference type="FunFam" id="3.90.190.10:FF:000020">
    <property type="entry name" value="Tyrosine-protein phosphatase non-receptor type 5"/>
    <property type="match status" value="1"/>
</dbReference>
<dbReference type="Gene3D" id="3.90.190.10">
    <property type="entry name" value="Protein tyrosine phosphatase superfamily"/>
    <property type="match status" value="1"/>
</dbReference>
<dbReference type="InterPro" id="IPR029021">
    <property type="entry name" value="Prot-tyrosine_phosphatase-like"/>
</dbReference>
<dbReference type="InterPro" id="IPR000242">
    <property type="entry name" value="PTP_cat"/>
</dbReference>
<dbReference type="InterPro" id="IPR016130">
    <property type="entry name" value="Tyr_Pase_AS"/>
</dbReference>
<dbReference type="InterPro" id="IPR003595">
    <property type="entry name" value="Tyr_Pase_cat"/>
</dbReference>
<dbReference type="InterPro" id="IPR000387">
    <property type="entry name" value="Tyr_Pase_dom"/>
</dbReference>
<dbReference type="InterPro" id="IPR008356">
    <property type="entry name" value="Tyr_Pase_KIM-con"/>
</dbReference>
<dbReference type="InterPro" id="IPR016334">
    <property type="entry name" value="Tyr_Pase_rcpt_R/non-rcpt_5"/>
</dbReference>
<dbReference type="PANTHER" id="PTHR46198">
    <property type="entry name" value="PROTEIN-TYROSINE-PHOSPHATASE"/>
    <property type="match status" value="1"/>
</dbReference>
<dbReference type="PANTHER" id="PTHR46198:SF2">
    <property type="entry name" value="RECEPTOR-TYPE TYROSINE-PROTEIN PHOSPHATASE R"/>
    <property type="match status" value="1"/>
</dbReference>
<dbReference type="Pfam" id="PF00102">
    <property type="entry name" value="Y_phosphatase"/>
    <property type="match status" value="1"/>
</dbReference>
<dbReference type="PIRSF" id="PIRSF001997">
    <property type="entry name" value="PTPRR"/>
    <property type="match status" value="1"/>
</dbReference>
<dbReference type="PRINTS" id="PR01778">
    <property type="entry name" value="KIMPTPASE"/>
</dbReference>
<dbReference type="PRINTS" id="PR00700">
    <property type="entry name" value="PRTYPHPHTASE"/>
</dbReference>
<dbReference type="SMART" id="SM00194">
    <property type="entry name" value="PTPc"/>
    <property type="match status" value="1"/>
</dbReference>
<dbReference type="SMART" id="SM00404">
    <property type="entry name" value="PTPc_motif"/>
    <property type="match status" value="1"/>
</dbReference>
<dbReference type="SUPFAM" id="SSF52799">
    <property type="entry name" value="(Phosphotyrosine protein) phosphatases II"/>
    <property type="match status" value="1"/>
</dbReference>
<dbReference type="PROSITE" id="PS00383">
    <property type="entry name" value="TYR_PHOSPHATASE_1"/>
    <property type="match status" value="1"/>
</dbReference>
<dbReference type="PROSITE" id="PS50056">
    <property type="entry name" value="TYR_PHOSPHATASE_2"/>
    <property type="match status" value="1"/>
</dbReference>
<dbReference type="PROSITE" id="PS50055">
    <property type="entry name" value="TYR_PHOSPHATASE_PTP"/>
    <property type="match status" value="1"/>
</dbReference>
<comment type="function">
    <text evidence="1">Sequesters mitogen-activated protein kinases (MAPKs) such as MAPK1, MAPK3 and MAPK14 in the cytoplasm in an inactive form. The MAPKs bind to a dephosphorylated kinase interacting motif, phosphorylation of which by the protein kinase A complex releases the MAPKs for activation and translocation into the nucleus (By similarity).</text>
</comment>
<comment type="catalytic activity">
    <reaction evidence="6">
        <text>O-phospho-L-tyrosyl-[protein] + H2O = L-tyrosyl-[protein] + phosphate</text>
        <dbReference type="Rhea" id="RHEA:10684"/>
        <dbReference type="Rhea" id="RHEA-COMP:10136"/>
        <dbReference type="Rhea" id="RHEA-COMP:20101"/>
        <dbReference type="ChEBI" id="CHEBI:15377"/>
        <dbReference type="ChEBI" id="CHEBI:43474"/>
        <dbReference type="ChEBI" id="CHEBI:46858"/>
        <dbReference type="ChEBI" id="CHEBI:61978"/>
        <dbReference type="EC" id="3.1.3.48"/>
    </reaction>
</comment>
<comment type="subunit">
    <text evidence="1">Interacts with MAPKs.</text>
</comment>
<comment type="interaction">
    <interactant intactId="EBI-8584374">
        <id>O08617</id>
    </interactant>
    <interactant intactId="EBI-7784541">
        <id>Q9WUD9</id>
        <label>Src</label>
    </interactant>
    <organismsDiffer>false</organismsDiffer>
    <experiments>2</experiments>
</comment>
<comment type="subcellular location">
    <molecule>Isoform 3</molecule>
    <subcellularLocation>
        <location evidence="1">Cytoplasm</location>
    </subcellularLocation>
</comment>
<comment type="subcellular location">
    <molecule>Isoform 2</molecule>
    <subcellularLocation>
        <location evidence="1">Cytoplasm</location>
    </subcellularLocation>
</comment>
<comment type="subcellular location">
    <molecule>Isoform 1</molecule>
    <subcellularLocation>
        <location evidence="1">Cytoplasm</location>
    </subcellularLocation>
</comment>
<comment type="subcellular location">
    <molecule>Isoform 4</molecule>
    <subcellularLocation>
        <location evidence="1">Cell membrane</location>
        <topology evidence="1">Single-pass type I membrane protein</topology>
    </subcellularLocation>
</comment>
<comment type="alternative products">
    <event type="alternative splicing"/>
    <isoform>
        <id>O08617-1</id>
        <name>4</name>
        <sequence type="displayed"/>
    </isoform>
    <isoform>
        <id>O08617-2</id>
        <name>1</name>
        <sequence type="described" ref="VSP_005162"/>
    </isoform>
    <isoform>
        <id>O08617-3</id>
        <name>2</name>
        <sequence type="described" ref="VSP_005163"/>
    </isoform>
    <isoform>
        <id>O08617-4</id>
        <name>3</name>
        <sequence type="described" ref="VSP_005164"/>
    </isoform>
</comment>
<comment type="tissue specificity">
    <text evidence="7 8">Widely expressed in the brain, most abundant in cerebellum, midbrain, cerebral cortex and hippocampus. Also expressed in heart and skeletal muscle.</text>
</comment>
<comment type="induction">
    <text evidence="8">By nerve growth factor; isoform 2 is induced in adrenal tumor cells 2 hours after exposure, levels are down-regulated 24 hours after treatment.</text>
</comment>
<comment type="similarity">
    <text evidence="11">Belongs to the protein-tyrosine phosphatase family. Receptor class 7 subfamily.</text>
</comment>
<keyword id="KW-0025">Alternative splicing</keyword>
<keyword id="KW-1003">Cell membrane</keyword>
<keyword id="KW-0963">Cytoplasm</keyword>
<keyword id="KW-0325">Glycoprotein</keyword>
<keyword id="KW-0378">Hydrolase</keyword>
<keyword id="KW-0472">Membrane</keyword>
<keyword id="KW-0597">Phosphoprotein</keyword>
<keyword id="KW-0904">Protein phosphatase</keyword>
<keyword id="KW-0654">Proteoglycan</keyword>
<keyword id="KW-0675">Receptor</keyword>
<keyword id="KW-1185">Reference proteome</keyword>
<keyword id="KW-0732">Signal</keyword>
<keyword id="KW-0812">Transmembrane</keyword>
<keyword id="KW-1133">Transmembrane helix</keyword>
<sequence>MRRAVGFPALCLLLNLHAAGCFSRNNDHFLAIRQKKSWKPMFIYDHSQDIKKSLDIAQEAYKHNYPAPSEVQISKRHQIVDSAFPRPAYDPSLNLLAASGQDLEIENLPIPAANVIVVTLQMDIDKLNITLLRIFRQGVAAALGLLPQQVHINRLIEKKSQIELFVSPGNRKPGEPQALQAEEVLRSLNVDVLRQSLPQFGSIDVSPEKNVLQGQHEADKIWSKEGFYAVVIFLSIFIIIVTCLMIIYRLKERLQLSFRQDKEKNQEIHLSPIALQQAQSEAKAAHSMVQPDQAPKVLNVVVDPQGQCTPEIRNTASTSVCPSPFRMKPIGLQERRGSNVSLTLDMSSLGNVEPFVAVSTPREKVAMEYLQSASRVLTSPQLRDVVASSHLLQSEFMEIPMNFVDPKEIDIPRHGTKNRYKTILPNPLSRVCLRPKNITDPLSTYINANYIRGYSGKEKAFIATQGPMINTVNDFWQMVWQEDSPVIVMITKLKEKNEKCVLYWPEKRGIYGKVEVLVIGVNECDNYTIRNLVLKRGSHTQHVKHYWYTSWPDHKTPDSAQPLLQLMLDVEEDRLASEGRGPVVVHCSAGIGRTGCFIATSIGCQQLKEEGVVDALSIVCQLRVDRGGMVQTSEQYEFVHHALCLFESRLSPETVQ</sequence>
<organism>
    <name type="scientific">Rattus norvegicus</name>
    <name type="common">Rat</name>
    <dbReference type="NCBI Taxonomy" id="10116"/>
    <lineage>
        <taxon>Eukaryota</taxon>
        <taxon>Metazoa</taxon>
        <taxon>Chordata</taxon>
        <taxon>Craniata</taxon>
        <taxon>Vertebrata</taxon>
        <taxon>Euteleostomi</taxon>
        <taxon>Mammalia</taxon>
        <taxon>Eutheria</taxon>
        <taxon>Euarchontoglires</taxon>
        <taxon>Glires</taxon>
        <taxon>Rodentia</taxon>
        <taxon>Myomorpha</taxon>
        <taxon>Muroidea</taxon>
        <taxon>Muridae</taxon>
        <taxon>Murinae</taxon>
        <taxon>Rattus</taxon>
    </lineage>
</organism>
<protein>
    <recommendedName>
        <fullName>Receptor-type tyrosine-protein phosphatase R</fullName>
        <shortName>R-PTP-R</shortName>
        <ecNumber>3.1.3.48</ecNumber>
    </recommendedName>
    <alternativeName>
        <fullName>PC12-PTP1</fullName>
    </alternativeName>
    <alternativeName>
        <fullName>Protein-tyrosine phosphatase PCPTP1</fullName>
    </alternativeName>
    <alternativeName>
        <fullName>Tyrosine phosphatase CBPTP</fullName>
    </alternativeName>
</protein>
<gene>
    <name type="primary">Ptprr</name>
    <name type="synonym">Ptp</name>
</gene>
<accession>O08617</accession>
<accession>Q62695</accession>
<accession>Q63419</accession>
<name>PTPRR_RAT</name>
<feature type="signal peptide" evidence="4">
    <location>
        <begin position="1"/>
        <end position="23"/>
    </location>
</feature>
<feature type="chain" id="PRO_0000025461" description="Receptor-type tyrosine-protein phosphatase R">
    <location>
        <begin position="24"/>
        <end position="656"/>
    </location>
</feature>
<feature type="topological domain" description="Extracellular" evidence="4">
    <location>
        <begin position="25"/>
        <end position="225"/>
    </location>
</feature>
<feature type="transmembrane region" description="Helical" evidence="4">
    <location>
        <begin position="226"/>
        <end position="248"/>
    </location>
</feature>
<feature type="topological domain" description="Cytoplasmic" evidence="4">
    <location>
        <begin position="249"/>
        <end position="656"/>
    </location>
</feature>
<feature type="domain" description="Tyrosine-protein phosphatase" evidence="5">
    <location>
        <begin position="392"/>
        <end position="646"/>
    </location>
</feature>
<feature type="active site" description="Phosphocysteine intermediate" evidence="5 6">
    <location>
        <position position="587"/>
    </location>
</feature>
<feature type="binding site" evidence="1">
    <location>
        <position position="553"/>
    </location>
    <ligand>
        <name>substrate</name>
    </ligand>
</feature>
<feature type="binding site" evidence="1">
    <location>
        <begin position="587"/>
        <end position="593"/>
    </location>
    <ligand>
        <name>substrate</name>
    </ligand>
</feature>
<feature type="binding site" evidence="1">
    <location>
        <position position="631"/>
    </location>
    <ligand>
        <name>substrate</name>
    </ligand>
</feature>
<feature type="modified residue" description="Phosphoserine" evidence="3">
    <location>
        <position position="271"/>
    </location>
</feature>
<feature type="modified residue" description="Phosphoserine; by PKA" evidence="3">
    <location>
        <position position="338"/>
    </location>
</feature>
<feature type="glycosylation site" description="O-linked (Xyl...) (chondroitin sulfate) serine" evidence="2">
    <location>
        <position position="23"/>
    </location>
</feature>
<feature type="glycosylation site" description="N-linked (GlcNAc...) asparagine" evidence="4">
    <location>
        <position position="128"/>
    </location>
</feature>
<feature type="splice variant" id="VSP_005164" description="In isoform 3." evidence="9">
    <location>
        <begin position="1"/>
        <end position="287"/>
    </location>
</feature>
<feature type="splice variant" id="VSP_005163" description="In isoform 2." evidence="10">
    <location>
        <begin position="1"/>
        <end position="244"/>
    </location>
</feature>
<feature type="splice variant" id="VSP_005162" description="In isoform 1." evidence="9">
    <location>
        <begin position="1"/>
        <end position="121"/>
    </location>
</feature>
<feature type="sequence conflict" description="In Ref. 1; BAA19530." evidence="11" ref="1">
    <original>S</original>
    <variation>I</variation>
    <location>
        <position position="202"/>
    </location>
</feature>
<feature type="sequence conflict" description="In Ref. 1 and 2." evidence="11" ref="1 2">
    <original>F</original>
    <variation>L</variation>
    <location>
        <position position="258"/>
    </location>
</feature>
<feature type="sequence conflict" description="In Ref. 1 and 2." evidence="11" ref="1 2">
    <original>S</original>
    <variation>R</variation>
    <location>
        <position position="379"/>
    </location>
</feature>
<feature type="sequence conflict" description="In Ref. 2; AAA64485." evidence="11" ref="2">
    <original>IY</original>
    <variation>TH</variation>
    <location>
        <begin position="510"/>
        <end position="511"/>
    </location>
</feature>
<evidence type="ECO:0000250" key="1"/>
<evidence type="ECO:0000250" key="2">
    <source>
        <dbReference type="UniProtKB" id="Q15256"/>
    </source>
</evidence>
<evidence type="ECO:0000250" key="3">
    <source>
        <dbReference type="UniProtKB" id="Q62132"/>
    </source>
</evidence>
<evidence type="ECO:0000255" key="4"/>
<evidence type="ECO:0000255" key="5">
    <source>
        <dbReference type="PROSITE-ProRule" id="PRU00160"/>
    </source>
</evidence>
<evidence type="ECO:0000255" key="6">
    <source>
        <dbReference type="PROSITE-ProRule" id="PRU10044"/>
    </source>
</evidence>
<evidence type="ECO:0000269" key="7">
    <source>
    </source>
</evidence>
<evidence type="ECO:0000269" key="8">
    <source>
    </source>
</evidence>
<evidence type="ECO:0000303" key="9">
    <source>
    </source>
</evidence>
<evidence type="ECO:0000303" key="10">
    <source>
    </source>
</evidence>
<evidence type="ECO:0000305" key="11"/>
<proteinExistence type="evidence at protein level"/>
<reference key="1">
    <citation type="journal article" date="1995" name="Gene">
        <title>Cloning and expression of PCPTP1 encoding protein tyrosine phosphatase.</title>
        <authorList>
            <person name="Shiozuka K."/>
            <person name="Watanabe Y."/>
            <person name="Ikeda T."/>
            <person name="Hashimoto S."/>
            <person name="Kawashima H."/>
        </authorList>
    </citation>
    <scope>NUCLEOTIDE SEQUENCE [MRNA] (ISOFORMS 1; 3 AND 4)</scope>
    <scope>TISSUE SPECIFICITY</scope>
    <source>
        <strain>Wistar</strain>
        <tissue>Cerebellum</tissue>
    </source>
</reference>
<reference key="2">
    <citation type="journal article" date="1995" name="J. Biol. Chem.">
        <title>A neuronal protein tyrosine phosphatase induced by nerve growth factor.</title>
        <authorList>
            <person name="Sharma E."/>
            <person name="Lombroso P.J."/>
        </authorList>
    </citation>
    <scope>NUCLEOTIDE SEQUENCE [MRNA] (ISOFORM 2)</scope>
    <scope>INDUCTION</scope>
    <scope>TISSUE SPECIFICITY</scope>
    <source>
        <tissue>Adrenal tumor</tissue>
    </source>
</reference>